<protein>
    <recommendedName>
        <fullName evidence="1">Glucokinase</fullName>
        <ecNumber evidence="1">2.7.1.2</ecNumber>
    </recommendedName>
    <alternativeName>
        <fullName evidence="1">Glucose kinase</fullName>
    </alternativeName>
</protein>
<name>GLK_XANC8</name>
<dbReference type="EC" id="2.7.1.2" evidence="1"/>
<dbReference type="EMBL" id="CP000050">
    <property type="protein sequence ID" value="AAY49039.1"/>
    <property type="molecule type" value="Genomic_DNA"/>
</dbReference>
<dbReference type="RefSeq" id="WP_011037288.1">
    <property type="nucleotide sequence ID" value="NZ_CP155948.1"/>
</dbReference>
<dbReference type="SMR" id="Q4UV84"/>
<dbReference type="KEGG" id="xcb:XC_1976"/>
<dbReference type="HOGENOM" id="CLU_042582_1_0_6"/>
<dbReference type="Proteomes" id="UP000000420">
    <property type="component" value="Chromosome"/>
</dbReference>
<dbReference type="GO" id="GO:0005829">
    <property type="term" value="C:cytosol"/>
    <property type="evidence" value="ECO:0007669"/>
    <property type="project" value="TreeGrafter"/>
</dbReference>
<dbReference type="GO" id="GO:0005524">
    <property type="term" value="F:ATP binding"/>
    <property type="evidence" value="ECO:0007669"/>
    <property type="project" value="UniProtKB-UniRule"/>
</dbReference>
<dbReference type="GO" id="GO:0005536">
    <property type="term" value="F:D-glucose binding"/>
    <property type="evidence" value="ECO:0007669"/>
    <property type="project" value="InterPro"/>
</dbReference>
<dbReference type="GO" id="GO:0004340">
    <property type="term" value="F:glucokinase activity"/>
    <property type="evidence" value="ECO:0007669"/>
    <property type="project" value="UniProtKB-UniRule"/>
</dbReference>
<dbReference type="GO" id="GO:0006096">
    <property type="term" value="P:glycolytic process"/>
    <property type="evidence" value="ECO:0007669"/>
    <property type="project" value="UniProtKB-UniRule"/>
</dbReference>
<dbReference type="CDD" id="cd24008">
    <property type="entry name" value="ASKHA_NBD_GLK"/>
    <property type="match status" value="1"/>
</dbReference>
<dbReference type="Gene3D" id="3.30.420.40">
    <property type="match status" value="1"/>
</dbReference>
<dbReference type="Gene3D" id="3.40.367.20">
    <property type="match status" value="1"/>
</dbReference>
<dbReference type="HAMAP" id="MF_00524">
    <property type="entry name" value="Glucokinase"/>
    <property type="match status" value="1"/>
</dbReference>
<dbReference type="InterPro" id="IPR043129">
    <property type="entry name" value="ATPase_NBD"/>
</dbReference>
<dbReference type="InterPro" id="IPR050201">
    <property type="entry name" value="Bacterial_glucokinase"/>
</dbReference>
<dbReference type="InterPro" id="IPR003836">
    <property type="entry name" value="Glucokinase"/>
</dbReference>
<dbReference type="NCBIfam" id="TIGR00749">
    <property type="entry name" value="glk"/>
    <property type="match status" value="1"/>
</dbReference>
<dbReference type="PANTHER" id="PTHR47690">
    <property type="entry name" value="GLUCOKINASE"/>
    <property type="match status" value="1"/>
</dbReference>
<dbReference type="PANTHER" id="PTHR47690:SF1">
    <property type="entry name" value="GLUCOKINASE"/>
    <property type="match status" value="1"/>
</dbReference>
<dbReference type="Pfam" id="PF02685">
    <property type="entry name" value="Glucokinase"/>
    <property type="match status" value="1"/>
</dbReference>
<dbReference type="SUPFAM" id="SSF53067">
    <property type="entry name" value="Actin-like ATPase domain"/>
    <property type="match status" value="1"/>
</dbReference>
<evidence type="ECO:0000255" key="1">
    <source>
        <dbReference type="HAMAP-Rule" id="MF_00524"/>
    </source>
</evidence>
<reference key="1">
    <citation type="journal article" date="2005" name="Genome Res.">
        <title>Comparative and functional genomic analyses of the pathogenicity of phytopathogen Xanthomonas campestris pv. campestris.</title>
        <authorList>
            <person name="Qian W."/>
            <person name="Jia Y."/>
            <person name="Ren S.-X."/>
            <person name="He Y.-Q."/>
            <person name="Feng J.-X."/>
            <person name="Lu L.-F."/>
            <person name="Sun Q."/>
            <person name="Ying G."/>
            <person name="Tang D.-J."/>
            <person name="Tang H."/>
            <person name="Wu W."/>
            <person name="Hao P."/>
            <person name="Wang L."/>
            <person name="Jiang B.-L."/>
            <person name="Zeng S."/>
            <person name="Gu W.-Y."/>
            <person name="Lu G."/>
            <person name="Rong L."/>
            <person name="Tian Y."/>
            <person name="Yao Z."/>
            <person name="Fu G."/>
            <person name="Chen B."/>
            <person name="Fang R."/>
            <person name="Qiang B."/>
            <person name="Chen Z."/>
            <person name="Zhao G.-P."/>
            <person name="Tang J.-L."/>
            <person name="He C."/>
        </authorList>
    </citation>
    <scope>NUCLEOTIDE SEQUENCE [LARGE SCALE GENOMIC DNA]</scope>
    <source>
        <strain>8004</strain>
    </source>
</reference>
<proteinExistence type="inferred from homology"/>
<accession>Q4UV84</accession>
<gene>
    <name evidence="1" type="primary">glk</name>
    <name type="ordered locus">XC_1976</name>
</gene>
<organism>
    <name type="scientific">Xanthomonas campestris pv. campestris (strain 8004)</name>
    <dbReference type="NCBI Taxonomy" id="314565"/>
    <lineage>
        <taxon>Bacteria</taxon>
        <taxon>Pseudomonadati</taxon>
        <taxon>Pseudomonadota</taxon>
        <taxon>Gammaproteobacteria</taxon>
        <taxon>Lysobacterales</taxon>
        <taxon>Lysobacteraceae</taxon>
        <taxon>Xanthomonas</taxon>
    </lineage>
</organism>
<feature type="chain" id="PRO_0000268790" description="Glucokinase">
    <location>
        <begin position="1"/>
        <end position="335"/>
    </location>
</feature>
<feature type="binding site" evidence="1">
    <location>
        <begin position="11"/>
        <end position="16"/>
    </location>
    <ligand>
        <name>ATP</name>
        <dbReference type="ChEBI" id="CHEBI:30616"/>
    </ligand>
</feature>
<comment type="catalytic activity">
    <reaction evidence="1">
        <text>D-glucose + ATP = D-glucose 6-phosphate + ADP + H(+)</text>
        <dbReference type="Rhea" id="RHEA:17825"/>
        <dbReference type="ChEBI" id="CHEBI:4167"/>
        <dbReference type="ChEBI" id="CHEBI:15378"/>
        <dbReference type="ChEBI" id="CHEBI:30616"/>
        <dbReference type="ChEBI" id="CHEBI:61548"/>
        <dbReference type="ChEBI" id="CHEBI:456216"/>
        <dbReference type="EC" id="2.7.1.2"/>
    </reaction>
</comment>
<comment type="subcellular location">
    <subcellularLocation>
        <location evidence="1">Cytoplasm</location>
    </subcellularLocation>
</comment>
<comment type="similarity">
    <text evidence="1">Belongs to the bacterial glucokinase family.</text>
</comment>
<sequence>MTAPSKPVLVADIGGTNARFALADIDASVPLLDDTCREFAVVEFGSLGEAARYYLDQIGVQATKGVFAVAGRVDGDEARITNHPWVISRSRTATMLGFSTLHLINDFAAQAMAISLLRPQDVVQVGGASWRPAPIELPRNYGVIGPGTGLGVGGLIIRNGRCFPLETEGGHVSFPPGTPEEIRVLEILSEQFGRVSNERLICGPGLVNIHRALSEIAGIDPGPLEPKDITARAAAGDPRASRTIDLFCAIFGAIAGDMVLMQGAWDGVFLTGGLVPKVLDSLQHSGFRQRFEHKGRFSAIMSRVPSLAVMHPHAGLLGAAAYAVDAERALPGEQR</sequence>
<keyword id="KW-0067">ATP-binding</keyword>
<keyword id="KW-0963">Cytoplasm</keyword>
<keyword id="KW-0324">Glycolysis</keyword>
<keyword id="KW-0418">Kinase</keyword>
<keyword id="KW-0547">Nucleotide-binding</keyword>
<keyword id="KW-0808">Transferase</keyword>